<keyword id="KW-0002">3D-structure</keyword>
<keyword id="KW-0067">ATP-binding</keyword>
<keyword id="KW-0436">Ligase</keyword>
<keyword id="KW-0547">Nucleotide-binding</keyword>
<keyword id="KW-0648">Protein biosynthesis</keyword>
<keyword id="KW-1185">Reference proteome</keyword>
<sequence>MELSPELLRKLETLAKIRLSPEEEALLLQDLKRILDFVDALPRVEEGGAEEALGRLREDEPRPSLPQAEALALAPEAEDGFFRVPPVLE</sequence>
<accession>Q9LCX4</accession>
<accession>Q5SJX6</accession>
<comment type="function">
    <text evidence="1">Allows the formation of correctly charged Asn-tRNA(Asn) or Gln-tRNA(Gln) through the transamidation of misacylated Asp-tRNA(Asn) or Glu-tRNA(Gln) in organisms which lack either or both of asparaginyl-tRNA or glutaminyl-tRNA synthetases. The reaction takes place in the presence of glutamine and ATP through an activated phospho-Asp-tRNA(Asn) or phospho-Glu-tRNA(Gln).</text>
</comment>
<comment type="catalytic activity">
    <reaction evidence="1">
        <text>L-glutamyl-tRNA(Gln) + L-glutamine + ATP + H2O = L-glutaminyl-tRNA(Gln) + L-glutamate + ADP + phosphate + H(+)</text>
        <dbReference type="Rhea" id="RHEA:17521"/>
        <dbReference type="Rhea" id="RHEA-COMP:9681"/>
        <dbReference type="Rhea" id="RHEA-COMP:9684"/>
        <dbReference type="ChEBI" id="CHEBI:15377"/>
        <dbReference type="ChEBI" id="CHEBI:15378"/>
        <dbReference type="ChEBI" id="CHEBI:29985"/>
        <dbReference type="ChEBI" id="CHEBI:30616"/>
        <dbReference type="ChEBI" id="CHEBI:43474"/>
        <dbReference type="ChEBI" id="CHEBI:58359"/>
        <dbReference type="ChEBI" id="CHEBI:78520"/>
        <dbReference type="ChEBI" id="CHEBI:78521"/>
        <dbReference type="ChEBI" id="CHEBI:456216"/>
    </reaction>
</comment>
<comment type="catalytic activity">
    <reaction evidence="1">
        <text>L-aspartyl-tRNA(Asn) + L-glutamine + ATP + H2O = L-asparaginyl-tRNA(Asn) + L-glutamate + ADP + phosphate + 2 H(+)</text>
        <dbReference type="Rhea" id="RHEA:14513"/>
        <dbReference type="Rhea" id="RHEA-COMP:9674"/>
        <dbReference type="Rhea" id="RHEA-COMP:9677"/>
        <dbReference type="ChEBI" id="CHEBI:15377"/>
        <dbReference type="ChEBI" id="CHEBI:15378"/>
        <dbReference type="ChEBI" id="CHEBI:29985"/>
        <dbReference type="ChEBI" id="CHEBI:30616"/>
        <dbReference type="ChEBI" id="CHEBI:43474"/>
        <dbReference type="ChEBI" id="CHEBI:58359"/>
        <dbReference type="ChEBI" id="CHEBI:78515"/>
        <dbReference type="ChEBI" id="CHEBI:78516"/>
        <dbReference type="ChEBI" id="CHEBI:456216"/>
    </reaction>
</comment>
<comment type="subunit">
    <text evidence="1">Heterotrimer of A, B and C subunits.</text>
</comment>
<comment type="similarity">
    <text evidence="1">Belongs to the GatC family.</text>
</comment>
<comment type="sequence caution" evidence="2">
    <conflict type="erroneous initiation">
        <sequence resource="EMBL-CDS" id="BAD70699"/>
    </conflict>
</comment>
<gene>
    <name evidence="1" type="primary">gatC</name>
    <name type="ordered locus">TTHA0876</name>
</gene>
<protein>
    <recommendedName>
        <fullName>Glutamyl-tRNA(Gln) amidotransferase subunit C</fullName>
        <shortName>Glu-ADT subunit C</shortName>
        <ecNumber evidence="1">6.3.5.-</ecNumber>
    </recommendedName>
</protein>
<reference key="1">
    <citation type="journal article" date="2000" name="FEBS Lett.">
        <title>The heterotrimeric Thermus thermophilus Asp-tRNA(Asn) amidotransferase can also generate Gln-tRNA(Gln).</title>
        <authorList>
            <person name="Becker H.D."/>
            <person name="Min B."/>
            <person name="Jacobi C."/>
            <person name="Raczniak G."/>
            <person name="Pelaschier J."/>
            <person name="Roy H."/>
            <person name="Klein S."/>
            <person name="Kern D."/>
            <person name="Soell D."/>
        </authorList>
    </citation>
    <scope>NUCLEOTIDE SEQUENCE [GENOMIC DNA]</scope>
</reference>
<reference key="2">
    <citation type="submission" date="2004-11" db="EMBL/GenBank/DDBJ databases">
        <title>Complete genome sequence of Thermus thermophilus HB8.</title>
        <authorList>
            <person name="Masui R."/>
            <person name="Kurokawa K."/>
            <person name="Nakagawa N."/>
            <person name="Tokunaga F."/>
            <person name="Koyama Y."/>
            <person name="Shibata T."/>
            <person name="Oshima T."/>
            <person name="Yokoyama S."/>
            <person name="Yasunaga T."/>
            <person name="Kuramitsu S."/>
        </authorList>
    </citation>
    <scope>NUCLEOTIDE SEQUENCE [LARGE SCALE GENOMIC DNA]</scope>
    <source>
        <strain>ATCC 27634 / DSM 579 / HB8</strain>
    </source>
</reference>
<evidence type="ECO:0000255" key="1">
    <source>
        <dbReference type="HAMAP-Rule" id="MF_00122"/>
    </source>
</evidence>
<evidence type="ECO:0000305" key="2"/>
<evidence type="ECO:0007829" key="3">
    <source>
        <dbReference type="PDB" id="3KFU"/>
    </source>
</evidence>
<organism>
    <name type="scientific">Thermus thermophilus (strain ATCC 27634 / DSM 579 / HB8)</name>
    <dbReference type="NCBI Taxonomy" id="300852"/>
    <lineage>
        <taxon>Bacteria</taxon>
        <taxon>Thermotogati</taxon>
        <taxon>Deinococcota</taxon>
        <taxon>Deinococci</taxon>
        <taxon>Thermales</taxon>
        <taxon>Thermaceae</taxon>
        <taxon>Thermus</taxon>
    </lineage>
</organism>
<feature type="chain" id="PRO_0000105353" description="Glutamyl-tRNA(Gln) amidotransferase subunit C">
    <location>
        <begin position="1"/>
        <end position="89"/>
    </location>
</feature>
<feature type="helix" evidence="3">
    <location>
        <begin position="5"/>
        <end position="14"/>
    </location>
</feature>
<feature type="helix" evidence="3">
    <location>
        <begin position="21"/>
        <end position="39"/>
    </location>
</feature>
<feature type="helix" evidence="3">
    <location>
        <begin position="67"/>
        <end position="71"/>
    </location>
</feature>
<feature type="strand" evidence="3">
    <location>
        <begin position="75"/>
        <end position="78"/>
    </location>
</feature>
<feature type="strand" evidence="3">
    <location>
        <begin position="81"/>
        <end position="84"/>
    </location>
</feature>
<proteinExistence type="evidence at protein level"/>
<dbReference type="EC" id="6.3.5.-" evidence="1"/>
<dbReference type="EMBL" id="AF202446">
    <property type="protein sequence ID" value="AAF91175.1"/>
    <property type="molecule type" value="Genomic_DNA"/>
</dbReference>
<dbReference type="EMBL" id="AP008226">
    <property type="protein sequence ID" value="BAD70699.1"/>
    <property type="status" value="ALT_INIT"/>
    <property type="molecule type" value="Genomic_DNA"/>
</dbReference>
<dbReference type="RefSeq" id="WP_024119135.1">
    <property type="nucleotide sequence ID" value="NC_006461.1"/>
</dbReference>
<dbReference type="RefSeq" id="YP_144142.1">
    <property type="nucleotide sequence ID" value="NC_006461.1"/>
</dbReference>
<dbReference type="PDB" id="3KFU">
    <property type="method" value="X-ray"/>
    <property type="resolution" value="3.00 A"/>
    <property type="chains" value="G/J=1-89"/>
</dbReference>
<dbReference type="PDBsum" id="3KFU"/>
<dbReference type="SMR" id="Q9LCX4"/>
<dbReference type="EnsemblBacteria" id="BAD70699">
    <property type="protein sequence ID" value="BAD70699"/>
    <property type="gene ID" value="BAD70699"/>
</dbReference>
<dbReference type="GeneID" id="3168271"/>
<dbReference type="KEGG" id="ttj:TTHA0876"/>
<dbReference type="PATRIC" id="fig|300852.9.peg.869"/>
<dbReference type="eggNOG" id="COG0721">
    <property type="taxonomic scope" value="Bacteria"/>
</dbReference>
<dbReference type="HOGENOM" id="CLU_105899_1_1_0"/>
<dbReference type="EvolutionaryTrace" id="Q9LCX4"/>
<dbReference type="Proteomes" id="UP000000532">
    <property type="component" value="Chromosome"/>
</dbReference>
<dbReference type="GO" id="GO:0050566">
    <property type="term" value="F:asparaginyl-tRNA synthase (glutamine-hydrolyzing) activity"/>
    <property type="evidence" value="ECO:0007669"/>
    <property type="project" value="RHEA"/>
</dbReference>
<dbReference type="GO" id="GO:0005524">
    <property type="term" value="F:ATP binding"/>
    <property type="evidence" value="ECO:0007669"/>
    <property type="project" value="UniProtKB-KW"/>
</dbReference>
<dbReference type="GO" id="GO:0050567">
    <property type="term" value="F:glutaminyl-tRNA synthase (glutamine-hydrolyzing) activity"/>
    <property type="evidence" value="ECO:0007669"/>
    <property type="project" value="UniProtKB-UniRule"/>
</dbReference>
<dbReference type="GO" id="GO:0070681">
    <property type="term" value="P:glutaminyl-tRNAGln biosynthesis via transamidation"/>
    <property type="evidence" value="ECO:0007669"/>
    <property type="project" value="TreeGrafter"/>
</dbReference>
<dbReference type="GO" id="GO:0006450">
    <property type="term" value="P:regulation of translational fidelity"/>
    <property type="evidence" value="ECO:0007669"/>
    <property type="project" value="InterPro"/>
</dbReference>
<dbReference type="GO" id="GO:0006412">
    <property type="term" value="P:translation"/>
    <property type="evidence" value="ECO:0007669"/>
    <property type="project" value="UniProtKB-UniRule"/>
</dbReference>
<dbReference type="Gene3D" id="1.10.8.990">
    <property type="match status" value="1"/>
</dbReference>
<dbReference type="Gene3D" id="1.10.20.60">
    <property type="entry name" value="Glu-tRNAGln amidotransferase C subunit, N-terminal domain"/>
    <property type="match status" value="1"/>
</dbReference>
<dbReference type="HAMAP" id="MF_00122">
    <property type="entry name" value="GatC"/>
    <property type="match status" value="1"/>
</dbReference>
<dbReference type="InterPro" id="IPR036113">
    <property type="entry name" value="Asp/Glu-ADT_sf_sub_c"/>
</dbReference>
<dbReference type="InterPro" id="IPR003837">
    <property type="entry name" value="GatC"/>
</dbReference>
<dbReference type="NCBIfam" id="TIGR00135">
    <property type="entry name" value="gatC"/>
    <property type="match status" value="1"/>
</dbReference>
<dbReference type="PANTHER" id="PTHR15004">
    <property type="entry name" value="GLUTAMYL-TRNA(GLN) AMIDOTRANSFERASE SUBUNIT C, MITOCHONDRIAL"/>
    <property type="match status" value="1"/>
</dbReference>
<dbReference type="PANTHER" id="PTHR15004:SF0">
    <property type="entry name" value="GLUTAMYL-TRNA(GLN) AMIDOTRANSFERASE SUBUNIT C, MITOCHONDRIAL"/>
    <property type="match status" value="1"/>
</dbReference>
<dbReference type="Pfam" id="PF02686">
    <property type="entry name" value="GatC"/>
    <property type="match status" value="1"/>
</dbReference>
<dbReference type="SUPFAM" id="SSF141000">
    <property type="entry name" value="Glu-tRNAGln amidotransferase C subunit"/>
    <property type="match status" value="1"/>
</dbReference>
<name>GATC_THET8</name>